<proteinExistence type="inferred from homology"/>
<keyword id="KW-0378">Hydrolase</keyword>
<keyword id="KW-1185">Reference proteome</keyword>
<reference key="1">
    <citation type="submission" date="2008-05" db="EMBL/GenBank/DDBJ databases">
        <title>Complete sequence of Shigella boydii serotype 18 strain BS512.</title>
        <authorList>
            <person name="Rasko D.A."/>
            <person name="Rosovitz M."/>
            <person name="Maurelli A.T."/>
            <person name="Myers G."/>
            <person name="Seshadri R."/>
            <person name="Cer R."/>
            <person name="Jiang L."/>
            <person name="Ravel J."/>
            <person name="Sebastian Y."/>
        </authorList>
    </citation>
    <scope>NUCLEOTIDE SEQUENCE [LARGE SCALE GENOMIC DNA]</scope>
    <source>
        <strain>CDC 3083-94 / BS512</strain>
    </source>
</reference>
<feature type="chain" id="PRO_1000115300" description="RNA pyrophosphohydrolase">
    <location>
        <begin position="1"/>
        <end position="176"/>
    </location>
</feature>
<feature type="domain" description="Nudix hydrolase" evidence="1">
    <location>
        <begin position="6"/>
        <end position="149"/>
    </location>
</feature>
<feature type="short sequence motif" description="Nudix box">
    <location>
        <begin position="38"/>
        <end position="59"/>
    </location>
</feature>
<accession>B2TYR1</accession>
<evidence type="ECO:0000255" key="1">
    <source>
        <dbReference type="HAMAP-Rule" id="MF_00298"/>
    </source>
</evidence>
<comment type="function">
    <text evidence="1">Accelerates the degradation of transcripts by removing pyrophosphate from the 5'-end of triphosphorylated RNA, leading to a more labile monophosphorylated state that can stimulate subsequent ribonuclease cleavage.</text>
</comment>
<comment type="cofactor">
    <cofactor evidence="1">
        <name>a divalent metal cation</name>
        <dbReference type="ChEBI" id="CHEBI:60240"/>
    </cofactor>
</comment>
<comment type="similarity">
    <text evidence="1">Belongs to the Nudix hydrolase family. RppH subfamily.</text>
</comment>
<organism>
    <name type="scientific">Shigella boydii serotype 18 (strain CDC 3083-94 / BS512)</name>
    <dbReference type="NCBI Taxonomy" id="344609"/>
    <lineage>
        <taxon>Bacteria</taxon>
        <taxon>Pseudomonadati</taxon>
        <taxon>Pseudomonadota</taxon>
        <taxon>Gammaproteobacteria</taxon>
        <taxon>Enterobacterales</taxon>
        <taxon>Enterobacteriaceae</taxon>
        <taxon>Shigella</taxon>
    </lineage>
</organism>
<name>RPPH_SHIB3</name>
<dbReference type="EC" id="3.6.1.-" evidence="1"/>
<dbReference type="EMBL" id="CP001063">
    <property type="protein sequence ID" value="ACD10190.1"/>
    <property type="molecule type" value="Genomic_DNA"/>
</dbReference>
<dbReference type="RefSeq" id="WP_000564490.1">
    <property type="nucleotide sequence ID" value="NC_010658.1"/>
</dbReference>
<dbReference type="SMR" id="B2TYR1"/>
<dbReference type="STRING" id="344609.SbBS512_E3032"/>
<dbReference type="GeneID" id="93779168"/>
<dbReference type="KEGG" id="sbc:SbBS512_E3032"/>
<dbReference type="HOGENOM" id="CLU_087195_3_2_6"/>
<dbReference type="Proteomes" id="UP000001030">
    <property type="component" value="Chromosome"/>
</dbReference>
<dbReference type="GO" id="GO:0005737">
    <property type="term" value="C:cytoplasm"/>
    <property type="evidence" value="ECO:0007669"/>
    <property type="project" value="TreeGrafter"/>
</dbReference>
<dbReference type="GO" id="GO:0034353">
    <property type="term" value="F:mRNA 5'-diphosphatase activity"/>
    <property type="evidence" value="ECO:0007669"/>
    <property type="project" value="TreeGrafter"/>
</dbReference>
<dbReference type="GO" id="GO:0006402">
    <property type="term" value="P:mRNA catabolic process"/>
    <property type="evidence" value="ECO:0007669"/>
    <property type="project" value="TreeGrafter"/>
</dbReference>
<dbReference type="CDD" id="cd03671">
    <property type="entry name" value="NUDIX_Ap4A_hydrolase_plant_like"/>
    <property type="match status" value="1"/>
</dbReference>
<dbReference type="FunFam" id="3.90.79.10:FF:000001">
    <property type="entry name" value="RNA pyrophosphohydrolase"/>
    <property type="match status" value="1"/>
</dbReference>
<dbReference type="Gene3D" id="3.90.79.10">
    <property type="entry name" value="Nucleoside Triphosphate Pyrophosphohydrolase"/>
    <property type="match status" value="1"/>
</dbReference>
<dbReference type="HAMAP" id="MF_00298">
    <property type="entry name" value="Nudix_RppH"/>
    <property type="match status" value="1"/>
</dbReference>
<dbReference type="InterPro" id="IPR020476">
    <property type="entry name" value="Nudix_hydrolase"/>
</dbReference>
<dbReference type="InterPro" id="IPR015797">
    <property type="entry name" value="NUDIX_hydrolase-like_dom_sf"/>
</dbReference>
<dbReference type="InterPro" id="IPR020084">
    <property type="entry name" value="NUDIX_hydrolase_CS"/>
</dbReference>
<dbReference type="InterPro" id="IPR000086">
    <property type="entry name" value="NUDIX_hydrolase_dom"/>
</dbReference>
<dbReference type="InterPro" id="IPR022927">
    <property type="entry name" value="RppH"/>
</dbReference>
<dbReference type="NCBIfam" id="NF001934">
    <property type="entry name" value="PRK00714.1-1"/>
    <property type="match status" value="1"/>
</dbReference>
<dbReference type="NCBIfam" id="NF001937">
    <property type="entry name" value="PRK00714.1-4"/>
    <property type="match status" value="1"/>
</dbReference>
<dbReference type="NCBIfam" id="NF001938">
    <property type="entry name" value="PRK00714.1-5"/>
    <property type="match status" value="1"/>
</dbReference>
<dbReference type="PANTHER" id="PTHR23114">
    <property type="entry name" value="M7GPPPN-MRNA HYDROLASE"/>
    <property type="match status" value="1"/>
</dbReference>
<dbReference type="PANTHER" id="PTHR23114:SF17">
    <property type="entry name" value="M7GPPPN-MRNA HYDROLASE"/>
    <property type="match status" value="1"/>
</dbReference>
<dbReference type="Pfam" id="PF00293">
    <property type="entry name" value="NUDIX"/>
    <property type="match status" value="1"/>
</dbReference>
<dbReference type="PRINTS" id="PR00502">
    <property type="entry name" value="NUDIXFAMILY"/>
</dbReference>
<dbReference type="SUPFAM" id="SSF55811">
    <property type="entry name" value="Nudix"/>
    <property type="match status" value="1"/>
</dbReference>
<dbReference type="PROSITE" id="PS51462">
    <property type="entry name" value="NUDIX"/>
    <property type="match status" value="1"/>
</dbReference>
<dbReference type="PROSITE" id="PS00893">
    <property type="entry name" value="NUDIX_BOX"/>
    <property type="match status" value="1"/>
</dbReference>
<sequence length="176" mass="20825">MIDDDGYRPNVGIVICNRQGQVMWARRFGQHSWQFPQGGINPGESAEQAMYRELFEEVGLSRKDVRILASTRNWLRYKLPKRLVRWDTKPVCIGQKQKWFLLQLVSGDAEINMQTSSTPEFDGWRWVSYWYPVRQVVSFKRDVYRRVMKEFASVVMSLQENTPKPQNTSAYRRKRG</sequence>
<gene>
    <name evidence="1" type="primary">rppH</name>
    <name evidence="1" type="synonym">nudH</name>
    <name type="ordered locus">SbBS512_E3032</name>
</gene>
<protein>
    <recommendedName>
        <fullName evidence="1">RNA pyrophosphohydrolase</fullName>
        <ecNumber evidence="1">3.6.1.-</ecNumber>
    </recommendedName>
    <alternativeName>
        <fullName evidence="1">(Di)nucleoside polyphosphate hydrolase</fullName>
    </alternativeName>
</protein>